<feature type="chain" id="PRO_0000193983" description="Hydrophobic protein OSR8">
    <location>
        <begin position="1"/>
        <end position="72"/>
    </location>
</feature>
<feature type="transmembrane region" description="Helical" evidence="1">
    <location>
        <begin position="9"/>
        <end position="29"/>
    </location>
</feature>
<feature type="transmembrane region" description="Helical" evidence="1">
    <location>
        <begin position="39"/>
        <end position="59"/>
    </location>
</feature>
<keyword id="KW-0472">Membrane</keyword>
<keyword id="KW-1185">Reference proteome</keyword>
<keyword id="KW-0812">Transmembrane</keyword>
<keyword id="KW-1133">Transmembrane helix</keyword>
<reference key="1">
    <citation type="submission" date="1999-07" db="EMBL/GenBank/DDBJ databases">
        <title>Molecular cloning and expression analysis of barley blt101 homologs from rice and wheat.</title>
        <authorList>
            <person name="Koike M."/>
            <person name="Kawakami A."/>
            <person name="Imai R."/>
            <person name="Oono K."/>
        </authorList>
    </citation>
    <scope>NUCLEOTIDE SEQUENCE [MRNA]</scope>
</reference>
<reference key="2">
    <citation type="journal article" date="2005" name="Nature">
        <title>The map-based sequence of the rice genome.</title>
        <authorList>
            <consortium name="International rice genome sequencing project (IRGSP)"/>
        </authorList>
    </citation>
    <scope>NUCLEOTIDE SEQUENCE [LARGE SCALE GENOMIC DNA]</scope>
    <source>
        <strain>cv. Nipponbare</strain>
    </source>
</reference>
<reference key="3">
    <citation type="journal article" date="2008" name="Nucleic Acids Res.">
        <title>The rice annotation project database (RAP-DB): 2008 update.</title>
        <authorList>
            <consortium name="The rice annotation project (RAP)"/>
        </authorList>
    </citation>
    <scope>GENOME REANNOTATION</scope>
    <source>
        <strain>cv. Nipponbare</strain>
    </source>
</reference>
<reference key="4">
    <citation type="journal article" date="2013" name="Rice">
        <title>Improvement of the Oryza sativa Nipponbare reference genome using next generation sequence and optical map data.</title>
        <authorList>
            <person name="Kawahara Y."/>
            <person name="de la Bastide M."/>
            <person name="Hamilton J.P."/>
            <person name="Kanamori H."/>
            <person name="McCombie W.R."/>
            <person name="Ouyang S."/>
            <person name="Schwartz D.C."/>
            <person name="Tanaka T."/>
            <person name="Wu J."/>
            <person name="Zhou S."/>
            <person name="Childs K.L."/>
            <person name="Davidson R.M."/>
            <person name="Lin H."/>
            <person name="Quesada-Ocampo L."/>
            <person name="Vaillancourt B."/>
            <person name="Sakai H."/>
            <person name="Lee S.S."/>
            <person name="Kim J."/>
            <person name="Numa H."/>
            <person name="Itoh T."/>
            <person name="Buell C.R."/>
            <person name="Matsumoto T."/>
        </authorList>
    </citation>
    <scope>GENOME REANNOTATION</scope>
    <source>
        <strain>cv. Nipponbare</strain>
    </source>
</reference>
<reference key="5">
    <citation type="journal article" date="2003" name="Science">
        <title>Collection, mapping, and annotation of over 28,000 cDNA clones from japonica rice.</title>
        <authorList>
            <consortium name="The rice full-length cDNA consortium"/>
        </authorList>
    </citation>
    <scope>NUCLEOTIDE SEQUENCE [LARGE SCALE MRNA]</scope>
    <source>
        <strain>cv. Nipponbare</strain>
    </source>
</reference>
<name>OSR8_ORYSJ</name>
<evidence type="ECO:0000255" key="1"/>
<evidence type="ECO:0000305" key="2"/>
<sequence length="72" mass="8039">MASGRCCTFLEILLAIILPPLGVFLRFGCCSMEFCICLLLTILGYVPGIIYAVYVLVALDSDQYQREYHTLA</sequence>
<accession>Q9LRI7</accession>
<accession>Q0IZP2</accession>
<accession>Q653S2</accession>
<dbReference type="EMBL" id="AB030211">
    <property type="protein sequence ID" value="BAB03289.1"/>
    <property type="molecule type" value="mRNA"/>
</dbReference>
<dbReference type="EMBL" id="AP005090">
    <property type="protein sequence ID" value="BAD45939.1"/>
    <property type="molecule type" value="Genomic_DNA"/>
</dbReference>
<dbReference type="EMBL" id="AP008215">
    <property type="protein sequence ID" value="BAF25823.1"/>
    <property type="molecule type" value="Genomic_DNA"/>
</dbReference>
<dbReference type="EMBL" id="AP014965">
    <property type="protein sequence ID" value="BAT09374.1"/>
    <property type="molecule type" value="Genomic_DNA"/>
</dbReference>
<dbReference type="EMBL" id="AK062410">
    <property type="protein sequence ID" value="BAG88303.1"/>
    <property type="molecule type" value="mRNA"/>
</dbReference>
<dbReference type="RefSeq" id="XP_015612003.1">
    <property type="nucleotide sequence ID" value="XM_015756517.1"/>
</dbReference>
<dbReference type="FunCoup" id="Q9LRI7">
    <property type="interactions" value="87"/>
</dbReference>
<dbReference type="STRING" id="39947.Q9LRI7"/>
<dbReference type="PaxDb" id="39947-Q9LRI7"/>
<dbReference type="EnsemblPlants" id="Os09t0558100-01">
    <property type="protein sequence ID" value="Os09t0558100-01"/>
    <property type="gene ID" value="Os09g0558100"/>
</dbReference>
<dbReference type="Gramene" id="Os09t0558100-01">
    <property type="protein sequence ID" value="Os09t0558100-01"/>
    <property type="gene ID" value="Os09g0558100"/>
</dbReference>
<dbReference type="KEGG" id="dosa:Os09g0558100"/>
<dbReference type="eggNOG" id="KOG1773">
    <property type="taxonomic scope" value="Eukaryota"/>
</dbReference>
<dbReference type="HOGENOM" id="CLU_107649_6_1_1"/>
<dbReference type="InParanoid" id="Q9LRI7"/>
<dbReference type="OMA" id="STATFCE"/>
<dbReference type="OrthoDB" id="2802411at2759"/>
<dbReference type="Proteomes" id="UP000000763">
    <property type="component" value="Chromosome 9"/>
</dbReference>
<dbReference type="Proteomes" id="UP000059680">
    <property type="component" value="Chromosome 9"/>
</dbReference>
<dbReference type="GO" id="GO:0016020">
    <property type="term" value="C:membrane"/>
    <property type="evidence" value="ECO:0007669"/>
    <property type="project" value="UniProtKB-SubCell"/>
</dbReference>
<dbReference type="InterPro" id="IPR000612">
    <property type="entry name" value="PMP3"/>
</dbReference>
<dbReference type="PANTHER" id="PTHR21659:SF115">
    <property type="entry name" value="HYDROPHOBIC PROTEIN OSR8"/>
    <property type="match status" value="1"/>
</dbReference>
<dbReference type="PANTHER" id="PTHR21659">
    <property type="entry name" value="HYDROPHOBIC PROTEIN RCI2 LOW TEMPERATURE AND SALT RESPONSIVE PROTEIN LTI6 -RELATED"/>
    <property type="match status" value="1"/>
</dbReference>
<dbReference type="Pfam" id="PF01679">
    <property type="entry name" value="Pmp3"/>
    <property type="match status" value="1"/>
</dbReference>
<dbReference type="PROSITE" id="PS01309">
    <property type="entry name" value="UPF0057"/>
    <property type="match status" value="1"/>
</dbReference>
<gene>
    <name type="primary">OSR8</name>
    <name type="ordered locus">Os09g0558100</name>
    <name type="ordered locus">LOC_Os09g38560</name>
    <name type="ORF">OJ1065_E04.3</name>
</gene>
<organism>
    <name type="scientific">Oryza sativa subsp. japonica</name>
    <name type="common">Rice</name>
    <dbReference type="NCBI Taxonomy" id="39947"/>
    <lineage>
        <taxon>Eukaryota</taxon>
        <taxon>Viridiplantae</taxon>
        <taxon>Streptophyta</taxon>
        <taxon>Embryophyta</taxon>
        <taxon>Tracheophyta</taxon>
        <taxon>Spermatophyta</taxon>
        <taxon>Magnoliopsida</taxon>
        <taxon>Liliopsida</taxon>
        <taxon>Poales</taxon>
        <taxon>Poaceae</taxon>
        <taxon>BOP clade</taxon>
        <taxon>Oryzoideae</taxon>
        <taxon>Oryzeae</taxon>
        <taxon>Oryzinae</taxon>
        <taxon>Oryza</taxon>
        <taxon>Oryza sativa</taxon>
    </lineage>
</organism>
<comment type="subcellular location">
    <subcellularLocation>
        <location evidence="2">Membrane</location>
        <topology evidence="2">Multi-pass membrane protein</topology>
    </subcellularLocation>
</comment>
<comment type="similarity">
    <text evidence="2">Belongs to the UPF0057 (PMP3) family.</text>
</comment>
<protein>
    <recommendedName>
        <fullName>Hydrophobic protein OSR8</fullName>
    </recommendedName>
</protein>
<proteinExistence type="inferred from homology"/>